<organism>
    <name type="scientific">Shewanella halifaxensis (strain HAW-EB4)</name>
    <dbReference type="NCBI Taxonomy" id="458817"/>
    <lineage>
        <taxon>Bacteria</taxon>
        <taxon>Pseudomonadati</taxon>
        <taxon>Pseudomonadota</taxon>
        <taxon>Gammaproteobacteria</taxon>
        <taxon>Alteromonadales</taxon>
        <taxon>Shewanellaceae</taxon>
        <taxon>Shewanella</taxon>
    </lineage>
</organism>
<gene>
    <name evidence="1" type="primary">aspS</name>
    <name type="ordered locus">Shal_1918</name>
</gene>
<feature type="chain" id="PRO_1000074721" description="Aspartate--tRNA ligase">
    <location>
        <begin position="1"/>
        <end position="598"/>
    </location>
</feature>
<feature type="region of interest" description="Aspartate" evidence="1">
    <location>
        <begin position="197"/>
        <end position="200"/>
    </location>
</feature>
<feature type="binding site" evidence="1">
    <location>
        <position position="173"/>
    </location>
    <ligand>
        <name>L-aspartate</name>
        <dbReference type="ChEBI" id="CHEBI:29991"/>
    </ligand>
</feature>
<feature type="binding site" evidence="1">
    <location>
        <begin position="219"/>
        <end position="221"/>
    </location>
    <ligand>
        <name>ATP</name>
        <dbReference type="ChEBI" id="CHEBI:30616"/>
    </ligand>
</feature>
<feature type="binding site" evidence="1">
    <location>
        <position position="219"/>
    </location>
    <ligand>
        <name>L-aspartate</name>
        <dbReference type="ChEBI" id="CHEBI:29991"/>
    </ligand>
</feature>
<feature type="binding site" evidence="1">
    <location>
        <position position="228"/>
    </location>
    <ligand>
        <name>ATP</name>
        <dbReference type="ChEBI" id="CHEBI:30616"/>
    </ligand>
</feature>
<feature type="binding site" evidence="1">
    <location>
        <position position="449"/>
    </location>
    <ligand>
        <name>L-aspartate</name>
        <dbReference type="ChEBI" id="CHEBI:29991"/>
    </ligand>
</feature>
<feature type="binding site" evidence="1">
    <location>
        <position position="483"/>
    </location>
    <ligand>
        <name>ATP</name>
        <dbReference type="ChEBI" id="CHEBI:30616"/>
    </ligand>
</feature>
<feature type="binding site" evidence="1">
    <location>
        <position position="490"/>
    </location>
    <ligand>
        <name>L-aspartate</name>
        <dbReference type="ChEBI" id="CHEBI:29991"/>
    </ligand>
</feature>
<feature type="binding site" evidence="1">
    <location>
        <begin position="535"/>
        <end position="538"/>
    </location>
    <ligand>
        <name>ATP</name>
        <dbReference type="ChEBI" id="CHEBI:30616"/>
    </ligand>
</feature>
<reference key="1">
    <citation type="submission" date="2008-01" db="EMBL/GenBank/DDBJ databases">
        <title>Complete sequence of Shewanella halifaxensis HAW-EB4.</title>
        <authorList>
            <consortium name="US DOE Joint Genome Institute"/>
            <person name="Copeland A."/>
            <person name="Lucas S."/>
            <person name="Lapidus A."/>
            <person name="Glavina del Rio T."/>
            <person name="Dalin E."/>
            <person name="Tice H."/>
            <person name="Bruce D."/>
            <person name="Goodwin L."/>
            <person name="Pitluck S."/>
            <person name="Sims D."/>
            <person name="Brettin T."/>
            <person name="Detter J.C."/>
            <person name="Han C."/>
            <person name="Kuske C.R."/>
            <person name="Schmutz J."/>
            <person name="Larimer F."/>
            <person name="Land M."/>
            <person name="Hauser L."/>
            <person name="Kyrpides N."/>
            <person name="Kim E."/>
            <person name="Zhao J.-S."/>
            <person name="Richardson P."/>
        </authorList>
    </citation>
    <scope>NUCLEOTIDE SEQUENCE [LARGE SCALE GENOMIC DNA]</scope>
    <source>
        <strain>HAW-EB4</strain>
    </source>
</reference>
<evidence type="ECO:0000255" key="1">
    <source>
        <dbReference type="HAMAP-Rule" id="MF_00044"/>
    </source>
</evidence>
<sequence>MRSHYCGDVNKSHVGQEVTLVGWVNRSRDLGGVVFLDLRDREGIVQVVYDPDLPEVFDVASTLRSEFCVQIKGLVRARPDSQINADMRTGEVEILGLELTILNSSAPLPINMDKNQHNTEEQRLKYRYLDLRRPEMADRIVFRSKVTSAVRRFLDGNGFLDIETPILTKATPEGARDYLVPSRTYKGQFFALPQSPQLFKQLLMMSGFDRYYQIVKCFRDEDLRADRQPEFTQIDIETSFMSSDQVMAKTEEMVRGLFQELLNVDLGEFPKMTFEEAMRRFGSDKPDLRNPLELIDVADIVKEVEFAVFNGPANDPEGRVAVLSIPGGAKLSRKQLDEYAKYVTIYGAKGLAWMKVNDLDKGMEGIQSPVLKFLSEDVVKALLERTGAQTGDLILFGADKANIVAESMGALRLKAGEDFDLLQGEWKPLWVVDFPMFERTSDGGLHAMHHPFTAPSNMTPEELEANPIAAISDAYDMVLNGCELGGGSVRIHDSKMQSAVFRILGINDEEATEKFGFLLEALRYGTPPHAGLAFGLDRIIMLMTGASSIRDVMAFPKTTTAACPLTNAPGFANPVQLAELGVSVVEAETKDSETKDAE</sequence>
<dbReference type="EC" id="6.1.1.12" evidence="1"/>
<dbReference type="EMBL" id="CP000931">
    <property type="protein sequence ID" value="ABZ76483.1"/>
    <property type="molecule type" value="Genomic_DNA"/>
</dbReference>
<dbReference type="RefSeq" id="WP_012277015.1">
    <property type="nucleotide sequence ID" value="NC_010334.1"/>
</dbReference>
<dbReference type="SMR" id="B0TSA3"/>
<dbReference type="STRING" id="458817.Shal_1918"/>
<dbReference type="KEGG" id="shl:Shal_1918"/>
<dbReference type="eggNOG" id="COG0173">
    <property type="taxonomic scope" value="Bacteria"/>
</dbReference>
<dbReference type="HOGENOM" id="CLU_014330_3_2_6"/>
<dbReference type="OrthoDB" id="9802326at2"/>
<dbReference type="Proteomes" id="UP000001317">
    <property type="component" value="Chromosome"/>
</dbReference>
<dbReference type="GO" id="GO:0005737">
    <property type="term" value="C:cytoplasm"/>
    <property type="evidence" value="ECO:0007669"/>
    <property type="project" value="UniProtKB-SubCell"/>
</dbReference>
<dbReference type="GO" id="GO:0004815">
    <property type="term" value="F:aspartate-tRNA ligase activity"/>
    <property type="evidence" value="ECO:0007669"/>
    <property type="project" value="UniProtKB-UniRule"/>
</dbReference>
<dbReference type="GO" id="GO:0005524">
    <property type="term" value="F:ATP binding"/>
    <property type="evidence" value="ECO:0007669"/>
    <property type="project" value="UniProtKB-UniRule"/>
</dbReference>
<dbReference type="GO" id="GO:0003676">
    <property type="term" value="F:nucleic acid binding"/>
    <property type="evidence" value="ECO:0007669"/>
    <property type="project" value="InterPro"/>
</dbReference>
<dbReference type="GO" id="GO:0006422">
    <property type="term" value="P:aspartyl-tRNA aminoacylation"/>
    <property type="evidence" value="ECO:0007669"/>
    <property type="project" value="UniProtKB-UniRule"/>
</dbReference>
<dbReference type="CDD" id="cd00777">
    <property type="entry name" value="AspRS_core"/>
    <property type="match status" value="1"/>
</dbReference>
<dbReference type="CDD" id="cd04317">
    <property type="entry name" value="EcAspRS_like_N"/>
    <property type="match status" value="1"/>
</dbReference>
<dbReference type="FunFam" id="2.40.50.140:FF:000080">
    <property type="entry name" value="Aspartate--tRNA ligase"/>
    <property type="match status" value="1"/>
</dbReference>
<dbReference type="Gene3D" id="3.30.930.10">
    <property type="entry name" value="Bira Bifunctional Protein, Domain 2"/>
    <property type="match status" value="1"/>
</dbReference>
<dbReference type="Gene3D" id="3.30.1360.30">
    <property type="entry name" value="GAD-like domain"/>
    <property type="match status" value="1"/>
</dbReference>
<dbReference type="Gene3D" id="2.40.50.140">
    <property type="entry name" value="Nucleic acid-binding proteins"/>
    <property type="match status" value="1"/>
</dbReference>
<dbReference type="HAMAP" id="MF_00044">
    <property type="entry name" value="Asp_tRNA_synth_type1"/>
    <property type="match status" value="1"/>
</dbReference>
<dbReference type="InterPro" id="IPR004364">
    <property type="entry name" value="Aa-tRNA-synt_II"/>
</dbReference>
<dbReference type="InterPro" id="IPR006195">
    <property type="entry name" value="aa-tRNA-synth_II"/>
</dbReference>
<dbReference type="InterPro" id="IPR045864">
    <property type="entry name" value="aa-tRNA-synth_II/BPL/LPL"/>
</dbReference>
<dbReference type="InterPro" id="IPR004524">
    <property type="entry name" value="Asp-tRNA-ligase_1"/>
</dbReference>
<dbReference type="InterPro" id="IPR047089">
    <property type="entry name" value="Asp-tRNA-ligase_1_N"/>
</dbReference>
<dbReference type="InterPro" id="IPR002312">
    <property type="entry name" value="Asp/Asn-tRNA-synth_IIb"/>
</dbReference>
<dbReference type="InterPro" id="IPR047090">
    <property type="entry name" value="AspRS_core"/>
</dbReference>
<dbReference type="InterPro" id="IPR004115">
    <property type="entry name" value="GAD-like_sf"/>
</dbReference>
<dbReference type="InterPro" id="IPR029351">
    <property type="entry name" value="GAD_dom"/>
</dbReference>
<dbReference type="InterPro" id="IPR012340">
    <property type="entry name" value="NA-bd_OB-fold"/>
</dbReference>
<dbReference type="InterPro" id="IPR004365">
    <property type="entry name" value="NA-bd_OB_tRNA"/>
</dbReference>
<dbReference type="NCBIfam" id="TIGR00459">
    <property type="entry name" value="aspS_bact"/>
    <property type="match status" value="1"/>
</dbReference>
<dbReference type="NCBIfam" id="NF001750">
    <property type="entry name" value="PRK00476.1"/>
    <property type="match status" value="1"/>
</dbReference>
<dbReference type="PANTHER" id="PTHR22594:SF5">
    <property type="entry name" value="ASPARTATE--TRNA LIGASE, MITOCHONDRIAL"/>
    <property type="match status" value="1"/>
</dbReference>
<dbReference type="PANTHER" id="PTHR22594">
    <property type="entry name" value="ASPARTYL/LYSYL-TRNA SYNTHETASE"/>
    <property type="match status" value="1"/>
</dbReference>
<dbReference type="Pfam" id="PF02938">
    <property type="entry name" value="GAD"/>
    <property type="match status" value="1"/>
</dbReference>
<dbReference type="Pfam" id="PF00152">
    <property type="entry name" value="tRNA-synt_2"/>
    <property type="match status" value="1"/>
</dbReference>
<dbReference type="Pfam" id="PF01336">
    <property type="entry name" value="tRNA_anti-codon"/>
    <property type="match status" value="1"/>
</dbReference>
<dbReference type="PRINTS" id="PR01042">
    <property type="entry name" value="TRNASYNTHASP"/>
</dbReference>
<dbReference type="SUPFAM" id="SSF55681">
    <property type="entry name" value="Class II aaRS and biotin synthetases"/>
    <property type="match status" value="1"/>
</dbReference>
<dbReference type="SUPFAM" id="SSF55261">
    <property type="entry name" value="GAD domain-like"/>
    <property type="match status" value="1"/>
</dbReference>
<dbReference type="SUPFAM" id="SSF50249">
    <property type="entry name" value="Nucleic acid-binding proteins"/>
    <property type="match status" value="1"/>
</dbReference>
<dbReference type="PROSITE" id="PS50862">
    <property type="entry name" value="AA_TRNA_LIGASE_II"/>
    <property type="match status" value="1"/>
</dbReference>
<proteinExistence type="inferred from homology"/>
<name>SYD_SHEHH</name>
<protein>
    <recommendedName>
        <fullName evidence="1">Aspartate--tRNA ligase</fullName>
        <ecNumber evidence="1">6.1.1.12</ecNumber>
    </recommendedName>
    <alternativeName>
        <fullName evidence="1">Aspartyl-tRNA synthetase</fullName>
        <shortName evidence="1">AspRS</shortName>
    </alternativeName>
</protein>
<keyword id="KW-0030">Aminoacyl-tRNA synthetase</keyword>
<keyword id="KW-0067">ATP-binding</keyword>
<keyword id="KW-0963">Cytoplasm</keyword>
<keyword id="KW-0436">Ligase</keyword>
<keyword id="KW-0547">Nucleotide-binding</keyword>
<keyword id="KW-0648">Protein biosynthesis</keyword>
<accession>B0TSA3</accession>
<comment type="function">
    <text evidence="1">Catalyzes the attachment of L-aspartate to tRNA(Asp) in a two-step reaction: L-aspartate is first activated by ATP to form Asp-AMP and then transferred to the acceptor end of tRNA(Asp).</text>
</comment>
<comment type="catalytic activity">
    <reaction evidence="1">
        <text>tRNA(Asp) + L-aspartate + ATP = L-aspartyl-tRNA(Asp) + AMP + diphosphate</text>
        <dbReference type="Rhea" id="RHEA:19649"/>
        <dbReference type="Rhea" id="RHEA-COMP:9660"/>
        <dbReference type="Rhea" id="RHEA-COMP:9678"/>
        <dbReference type="ChEBI" id="CHEBI:29991"/>
        <dbReference type="ChEBI" id="CHEBI:30616"/>
        <dbReference type="ChEBI" id="CHEBI:33019"/>
        <dbReference type="ChEBI" id="CHEBI:78442"/>
        <dbReference type="ChEBI" id="CHEBI:78516"/>
        <dbReference type="ChEBI" id="CHEBI:456215"/>
        <dbReference type="EC" id="6.1.1.12"/>
    </reaction>
</comment>
<comment type="subunit">
    <text evidence="1">Homodimer.</text>
</comment>
<comment type="subcellular location">
    <subcellularLocation>
        <location evidence="1">Cytoplasm</location>
    </subcellularLocation>
</comment>
<comment type="similarity">
    <text evidence="1">Belongs to the class-II aminoacyl-tRNA synthetase family. Type 1 subfamily.</text>
</comment>